<keyword id="KW-0158">Chromosome</keyword>
<keyword id="KW-0217">Developmental protein</keyword>
<keyword id="KW-0221">Differentiation</keyword>
<keyword id="KW-0226">DNA condensation</keyword>
<keyword id="KW-0238">DNA-binding</keyword>
<keyword id="KW-0544">Nucleosome core</keyword>
<keyword id="KW-0539">Nucleus</keyword>
<keyword id="KW-0744">Spermatogenesis</keyword>
<protein>
    <recommendedName>
        <fullName>Sperm protamine P1</fullName>
    </recommendedName>
</protein>
<gene>
    <name type="primary">PRM1</name>
</gene>
<sequence>MARYRCCRSQSRSRCCRPRRRCRRRRRRSCRARRRATRCCRRRYRLRCRRY</sequence>
<feature type="chain" id="PRO_0000191585" description="Sperm protamine P1">
    <location>
        <begin position="1"/>
        <end position="51"/>
    </location>
</feature>
<dbReference type="EMBL" id="AF294856">
    <property type="protein sequence ID" value="AAM68939.1"/>
    <property type="molecule type" value="Genomic_DNA"/>
</dbReference>
<dbReference type="GO" id="GO:0000786">
    <property type="term" value="C:nucleosome"/>
    <property type="evidence" value="ECO:0007669"/>
    <property type="project" value="UniProtKB-KW"/>
</dbReference>
<dbReference type="GO" id="GO:0005634">
    <property type="term" value="C:nucleus"/>
    <property type="evidence" value="ECO:0007669"/>
    <property type="project" value="UniProtKB-SubCell"/>
</dbReference>
<dbReference type="GO" id="GO:0003677">
    <property type="term" value="F:DNA binding"/>
    <property type="evidence" value="ECO:0007669"/>
    <property type="project" value="UniProtKB-KW"/>
</dbReference>
<dbReference type="GO" id="GO:0030261">
    <property type="term" value="P:chromosome condensation"/>
    <property type="evidence" value="ECO:0007669"/>
    <property type="project" value="UniProtKB-KW"/>
</dbReference>
<dbReference type="GO" id="GO:0035092">
    <property type="term" value="P:sperm DNA condensation"/>
    <property type="evidence" value="ECO:0007669"/>
    <property type="project" value="InterPro"/>
</dbReference>
<dbReference type="InterPro" id="IPR000221">
    <property type="entry name" value="Protamine_P1"/>
</dbReference>
<dbReference type="Pfam" id="PF00260">
    <property type="entry name" value="Protamine_P1"/>
    <property type="match status" value="1"/>
</dbReference>
<dbReference type="PROSITE" id="PS00048">
    <property type="entry name" value="PROTAMINE_P1"/>
    <property type="match status" value="1"/>
</dbReference>
<proteinExistence type="evidence at transcript level"/>
<evidence type="ECO:0000250" key="1"/>
<evidence type="ECO:0000305" key="2"/>
<organism>
    <name type="scientific">Trachypithecus pileatus</name>
    <name type="common">Capped langur</name>
    <name type="synonym">Capped leaf monkey</name>
    <dbReference type="NCBI Taxonomy" id="164651"/>
    <lineage>
        <taxon>Eukaryota</taxon>
        <taxon>Metazoa</taxon>
        <taxon>Chordata</taxon>
        <taxon>Craniata</taxon>
        <taxon>Vertebrata</taxon>
        <taxon>Euteleostomi</taxon>
        <taxon>Mammalia</taxon>
        <taxon>Eutheria</taxon>
        <taxon>Euarchontoglires</taxon>
        <taxon>Primates</taxon>
        <taxon>Haplorrhini</taxon>
        <taxon>Catarrhini</taxon>
        <taxon>Cercopithecidae</taxon>
        <taxon>Colobinae</taxon>
        <taxon>Trachypithecus</taxon>
    </lineage>
</organism>
<reference key="1">
    <citation type="submission" date="2000-08" db="EMBL/GenBank/DDBJ databases">
        <title>Molecular systematics of the langurs.</title>
        <authorList>
            <person name="Karanth P.K."/>
            <person name="Singh L."/>
            <person name="Stewart C.-B."/>
        </authorList>
    </citation>
    <scope>NUCLEOTIDE SEQUENCE [GENOMIC DNA]</scope>
    <source>
        <strain>Isolate CL2</strain>
    </source>
</reference>
<name>HSP1_TRAPL</name>
<comment type="function">
    <text evidence="1">Protamines substitute for histones in the chromatin of sperm during the haploid phase of spermatogenesis. They compact sperm DNA into a highly condensed, stable and inactive complex (By similarity).</text>
</comment>
<comment type="subcellular location">
    <subcellularLocation>
        <location evidence="1">Nucleus</location>
    </subcellularLocation>
    <subcellularLocation>
        <location evidence="1">Chromosome</location>
    </subcellularLocation>
</comment>
<comment type="tissue specificity">
    <text>Testis.</text>
</comment>
<comment type="similarity">
    <text evidence="2">Belongs to the protamine P1 family.</text>
</comment>
<accession>Q7JHM9</accession>